<dbReference type="EMBL" id="AC000348">
    <property type="protein sequence ID" value="AAF79877.1"/>
    <property type="molecule type" value="Genomic_DNA"/>
</dbReference>
<dbReference type="EMBL" id="CP002684">
    <property type="protein sequence ID" value="AEE30771.1"/>
    <property type="molecule type" value="Genomic_DNA"/>
</dbReference>
<dbReference type="EMBL" id="CP002684">
    <property type="protein sequence ID" value="AEE30772.1"/>
    <property type="molecule type" value="Genomic_DNA"/>
</dbReference>
<dbReference type="EMBL" id="AY072134">
    <property type="protein sequence ID" value="AAL59956.1"/>
    <property type="molecule type" value="mRNA"/>
</dbReference>
<dbReference type="EMBL" id="AY096445">
    <property type="protein sequence ID" value="AAM20085.1"/>
    <property type="molecule type" value="mRNA"/>
</dbReference>
<dbReference type="PIR" id="C86397">
    <property type="entry name" value="C86397"/>
</dbReference>
<dbReference type="RefSeq" id="NP_174024.2">
    <molecule id="Q8VYE4-1"/>
    <property type="nucleotide sequence ID" value="NM_102466.4"/>
</dbReference>
<dbReference type="RefSeq" id="NP_973919.1">
    <molecule id="Q8VYE4-2"/>
    <property type="nucleotide sequence ID" value="NM_202190.1"/>
</dbReference>
<dbReference type="SMR" id="Q8VYE4"/>
<dbReference type="BioGRID" id="24828">
    <property type="interactions" value="1"/>
</dbReference>
<dbReference type="FunCoup" id="Q8VYE4">
    <property type="interactions" value="1"/>
</dbReference>
<dbReference type="IntAct" id="Q8VYE4">
    <property type="interactions" value="1"/>
</dbReference>
<dbReference type="STRING" id="3702.Q8VYE4"/>
<dbReference type="PaxDb" id="3702-AT1G27040.1"/>
<dbReference type="ProteomicsDB" id="226239">
    <molecule id="Q8VYE4-1"/>
</dbReference>
<dbReference type="EnsemblPlants" id="AT1G27040.1">
    <molecule id="Q8VYE4-1"/>
    <property type="protein sequence ID" value="AT1G27040.1"/>
    <property type="gene ID" value="AT1G27040"/>
</dbReference>
<dbReference type="EnsemblPlants" id="AT1G27040.2">
    <molecule id="Q8VYE4-2"/>
    <property type="protein sequence ID" value="AT1G27040.2"/>
    <property type="gene ID" value="AT1G27040"/>
</dbReference>
<dbReference type="GeneID" id="839593"/>
<dbReference type="Gramene" id="AT1G27040.1">
    <molecule id="Q8VYE4-1"/>
    <property type="protein sequence ID" value="AT1G27040.1"/>
    <property type="gene ID" value="AT1G27040"/>
</dbReference>
<dbReference type="Gramene" id="AT1G27040.2">
    <molecule id="Q8VYE4-2"/>
    <property type="protein sequence ID" value="AT1G27040.2"/>
    <property type="gene ID" value="AT1G27040"/>
</dbReference>
<dbReference type="KEGG" id="ath:AT1G27040"/>
<dbReference type="Araport" id="AT1G27040"/>
<dbReference type="TAIR" id="AT1G27040">
    <property type="gene designation" value="NPF4.5"/>
</dbReference>
<dbReference type="eggNOG" id="KOG1237">
    <property type="taxonomic scope" value="Eukaryota"/>
</dbReference>
<dbReference type="InParanoid" id="Q8VYE4"/>
<dbReference type="PhylomeDB" id="Q8VYE4"/>
<dbReference type="PRO" id="PR:Q8VYE4"/>
<dbReference type="Proteomes" id="UP000006548">
    <property type="component" value="Chromosome 1"/>
</dbReference>
<dbReference type="ExpressionAtlas" id="Q8VYE4">
    <property type="expression patterns" value="baseline and differential"/>
</dbReference>
<dbReference type="GO" id="GO:0016020">
    <property type="term" value="C:membrane"/>
    <property type="evidence" value="ECO:0007669"/>
    <property type="project" value="UniProtKB-SubCell"/>
</dbReference>
<dbReference type="GO" id="GO:0022857">
    <property type="term" value="F:transmembrane transporter activity"/>
    <property type="evidence" value="ECO:0007669"/>
    <property type="project" value="InterPro"/>
</dbReference>
<dbReference type="CDD" id="cd17414">
    <property type="entry name" value="MFS_NPF4"/>
    <property type="match status" value="1"/>
</dbReference>
<dbReference type="Gene3D" id="1.20.1250.20">
    <property type="entry name" value="MFS general substrate transporter like domains"/>
    <property type="match status" value="1"/>
</dbReference>
<dbReference type="InterPro" id="IPR036259">
    <property type="entry name" value="MFS_trans_sf"/>
</dbReference>
<dbReference type="InterPro" id="IPR000109">
    <property type="entry name" value="POT_fam"/>
</dbReference>
<dbReference type="PANTHER" id="PTHR11654">
    <property type="entry name" value="OLIGOPEPTIDE TRANSPORTER-RELATED"/>
    <property type="match status" value="1"/>
</dbReference>
<dbReference type="Pfam" id="PF00854">
    <property type="entry name" value="PTR2"/>
    <property type="match status" value="1"/>
</dbReference>
<dbReference type="SUPFAM" id="SSF103473">
    <property type="entry name" value="MFS general substrate transporter"/>
    <property type="match status" value="1"/>
</dbReference>
<name>PTR12_ARATH</name>
<evidence type="ECO:0000250" key="1"/>
<evidence type="ECO:0000255" key="2"/>
<evidence type="ECO:0000269" key="3">
    <source>
    </source>
</evidence>
<evidence type="ECO:0000269" key="4">
    <source>
    </source>
</evidence>
<evidence type="ECO:0000305" key="5"/>
<gene>
    <name type="primary">NPF4.5</name>
    <name type="synonym">AIT2</name>
    <name type="ordered locus">At1g27040</name>
    <name type="ORF">T7N9.10</name>
</gene>
<accession>Q8VYE4</accession>
<accession>O04553</accession>
<keyword id="KW-0025">Alternative splicing</keyword>
<keyword id="KW-0472">Membrane</keyword>
<keyword id="KW-1185">Reference proteome</keyword>
<keyword id="KW-0812">Transmembrane</keyword>
<keyword id="KW-1133">Transmembrane helix</keyword>
<keyword id="KW-0813">Transport</keyword>
<sequence length="567" mass="62653">MEVEMHGDVSKWEGYADWRNKAALRGRHGGMLAASFVLAVEILENLAFLANASNLVLYLKNFMHMSLARSSSEVTTFMATAFLLALLGGFLADAFFSTFVIFLISASIEFLGLILLTIQARRPSLMPPPCKSSAALRCEVVGGSKAAFLFVGLYLVSLGIGGIKGSLPSHGAEQFDEGTPKGRKQRSTFFNYYVFCLSCGALVAVTFVVWIEDNKGWEWGFGVSTISIFLSILVFLLGSRFYKNKIPRGSPLTTIFKVLLAASIVSCSSKTSSNHFTSREVQSEHEEKTPSQSLTNSLTCLNKAIEGKTHHIWLECTVQQVEDVKIVLKMLPIFGCTIMLNCCLAQLSTYSVHQAATMNRKIVNFNVPSASLPVFPVVFMLILAPTYDHLIIPFARKVTKSEIGITHLQRIGVGLVLSIVAMAVAALVELKRKQVAREAGLLDSEETLPITFLWIALQYLFLGSADLFTLAGLLEFFFTEAPSSMRSLATSLSWASLALGYYLSSVMVPIVNRVTKSAGQSPWLGEKLNRNRLDLFYWLMCVLSVVNFLHYLFWAKRYKYISTGSIS</sequence>
<feature type="chain" id="PRO_0000399946" description="Protein NRT1/ PTR FAMILY 4.5">
    <location>
        <begin position="1"/>
        <end position="567"/>
    </location>
</feature>
<feature type="transmembrane region" description="Helical" evidence="2">
    <location>
        <begin position="30"/>
        <end position="50"/>
    </location>
</feature>
<feature type="transmembrane region" description="Helical" evidence="2">
    <location>
        <begin position="70"/>
        <end position="92"/>
    </location>
</feature>
<feature type="transmembrane region" description="Helical" evidence="2">
    <location>
        <begin position="99"/>
        <end position="118"/>
    </location>
</feature>
<feature type="transmembrane region" description="Helical" evidence="2">
    <location>
        <begin position="147"/>
        <end position="167"/>
    </location>
</feature>
<feature type="transmembrane region" description="Helical" evidence="2">
    <location>
        <begin position="189"/>
        <end position="209"/>
    </location>
</feature>
<feature type="transmembrane region" description="Helical" evidence="2">
    <location>
        <begin position="219"/>
        <end position="239"/>
    </location>
</feature>
<feature type="transmembrane region" description="Helical" evidence="2">
    <location>
        <begin position="326"/>
        <end position="346"/>
    </location>
</feature>
<feature type="transmembrane region" description="Helical" evidence="2">
    <location>
        <begin position="374"/>
        <end position="394"/>
    </location>
</feature>
<feature type="transmembrane region" description="Helical" evidence="2">
    <location>
        <begin position="411"/>
        <end position="431"/>
    </location>
</feature>
<feature type="transmembrane region" description="Helical" evidence="2">
    <location>
        <begin position="448"/>
        <end position="468"/>
    </location>
</feature>
<feature type="transmembrane region" description="Helical" evidence="2">
    <location>
        <begin position="491"/>
        <end position="511"/>
    </location>
</feature>
<feature type="transmembrane region" description="Helical" evidence="2">
    <location>
        <begin position="535"/>
        <end position="555"/>
    </location>
</feature>
<feature type="splice variant" id="VSP_039947" description="In isoform 2." evidence="5">
    <location>
        <begin position="1"/>
        <end position="4"/>
    </location>
</feature>
<comment type="function">
    <text evidence="4">Involved in abscisic acid transport.</text>
</comment>
<comment type="subcellular location">
    <subcellularLocation>
        <location evidence="1">Membrane</location>
        <topology evidence="1">Multi-pass membrane protein</topology>
    </subcellularLocation>
</comment>
<comment type="alternative products">
    <event type="alternative splicing"/>
    <isoform>
        <id>Q8VYE4-1</id>
        <name>1</name>
        <sequence type="displayed"/>
    </isoform>
    <isoform>
        <id>Q8VYE4-2</id>
        <name>2</name>
        <sequence type="described" ref="VSP_039947"/>
    </isoform>
</comment>
<comment type="tissue specificity">
    <text evidence="3">Expressed in flowers and siliques.</text>
</comment>
<comment type="similarity">
    <text evidence="5">Belongs to the major facilitator superfamily. Proton-dependent oligopeptide transporter (POT/PTR) (TC 2.A.17) family.</text>
</comment>
<reference key="1">
    <citation type="journal article" date="2000" name="Nature">
        <title>Sequence and analysis of chromosome 1 of the plant Arabidopsis thaliana.</title>
        <authorList>
            <person name="Theologis A."/>
            <person name="Ecker J.R."/>
            <person name="Palm C.J."/>
            <person name="Federspiel N.A."/>
            <person name="Kaul S."/>
            <person name="White O."/>
            <person name="Alonso J."/>
            <person name="Altafi H."/>
            <person name="Araujo R."/>
            <person name="Bowman C.L."/>
            <person name="Brooks S.Y."/>
            <person name="Buehler E."/>
            <person name="Chan A."/>
            <person name="Chao Q."/>
            <person name="Chen H."/>
            <person name="Cheuk R.F."/>
            <person name="Chin C.W."/>
            <person name="Chung M.K."/>
            <person name="Conn L."/>
            <person name="Conway A.B."/>
            <person name="Conway A.R."/>
            <person name="Creasy T.H."/>
            <person name="Dewar K."/>
            <person name="Dunn P."/>
            <person name="Etgu P."/>
            <person name="Feldblyum T.V."/>
            <person name="Feng J.-D."/>
            <person name="Fong B."/>
            <person name="Fujii C.Y."/>
            <person name="Gill J.E."/>
            <person name="Goldsmith A.D."/>
            <person name="Haas B."/>
            <person name="Hansen N.F."/>
            <person name="Hughes B."/>
            <person name="Huizar L."/>
            <person name="Hunter J.L."/>
            <person name="Jenkins J."/>
            <person name="Johnson-Hopson C."/>
            <person name="Khan S."/>
            <person name="Khaykin E."/>
            <person name="Kim C.J."/>
            <person name="Koo H.L."/>
            <person name="Kremenetskaia I."/>
            <person name="Kurtz D.B."/>
            <person name="Kwan A."/>
            <person name="Lam B."/>
            <person name="Langin-Hooper S."/>
            <person name="Lee A."/>
            <person name="Lee J.M."/>
            <person name="Lenz C.A."/>
            <person name="Li J.H."/>
            <person name="Li Y.-P."/>
            <person name="Lin X."/>
            <person name="Liu S.X."/>
            <person name="Liu Z.A."/>
            <person name="Luros J.S."/>
            <person name="Maiti R."/>
            <person name="Marziali A."/>
            <person name="Militscher J."/>
            <person name="Miranda M."/>
            <person name="Nguyen M."/>
            <person name="Nierman W.C."/>
            <person name="Osborne B.I."/>
            <person name="Pai G."/>
            <person name="Peterson J."/>
            <person name="Pham P.K."/>
            <person name="Rizzo M."/>
            <person name="Rooney T."/>
            <person name="Rowley D."/>
            <person name="Sakano H."/>
            <person name="Salzberg S.L."/>
            <person name="Schwartz J.R."/>
            <person name="Shinn P."/>
            <person name="Southwick A.M."/>
            <person name="Sun H."/>
            <person name="Tallon L.J."/>
            <person name="Tambunga G."/>
            <person name="Toriumi M.J."/>
            <person name="Town C.D."/>
            <person name="Utterback T."/>
            <person name="Van Aken S."/>
            <person name="Vaysberg M."/>
            <person name="Vysotskaia V.S."/>
            <person name="Walker M."/>
            <person name="Wu D."/>
            <person name="Yu G."/>
            <person name="Fraser C.M."/>
            <person name="Venter J.C."/>
            <person name="Davis R.W."/>
        </authorList>
    </citation>
    <scope>NUCLEOTIDE SEQUENCE [LARGE SCALE GENOMIC DNA]</scope>
    <source>
        <strain>cv. Columbia</strain>
    </source>
</reference>
<reference key="2">
    <citation type="journal article" date="2017" name="Plant J.">
        <title>Araport11: a complete reannotation of the Arabidopsis thaliana reference genome.</title>
        <authorList>
            <person name="Cheng C.Y."/>
            <person name="Krishnakumar V."/>
            <person name="Chan A.P."/>
            <person name="Thibaud-Nissen F."/>
            <person name="Schobel S."/>
            <person name="Town C.D."/>
        </authorList>
    </citation>
    <scope>GENOME REANNOTATION</scope>
    <source>
        <strain>cv. Columbia</strain>
    </source>
</reference>
<reference key="3">
    <citation type="journal article" date="2003" name="Science">
        <title>Empirical analysis of transcriptional activity in the Arabidopsis genome.</title>
        <authorList>
            <person name="Yamada K."/>
            <person name="Lim J."/>
            <person name="Dale J.M."/>
            <person name="Chen H."/>
            <person name="Shinn P."/>
            <person name="Palm C.J."/>
            <person name="Southwick A.M."/>
            <person name="Wu H.C."/>
            <person name="Kim C.J."/>
            <person name="Nguyen M."/>
            <person name="Pham P.K."/>
            <person name="Cheuk R.F."/>
            <person name="Karlin-Newmann G."/>
            <person name="Liu S.X."/>
            <person name="Lam B."/>
            <person name="Sakano H."/>
            <person name="Wu T."/>
            <person name="Yu G."/>
            <person name="Miranda M."/>
            <person name="Quach H.L."/>
            <person name="Tripp M."/>
            <person name="Chang C.H."/>
            <person name="Lee J.M."/>
            <person name="Toriumi M.J."/>
            <person name="Chan M.M."/>
            <person name="Tang C.C."/>
            <person name="Onodera C.S."/>
            <person name="Deng J.M."/>
            <person name="Akiyama K."/>
            <person name="Ansari Y."/>
            <person name="Arakawa T."/>
            <person name="Banh J."/>
            <person name="Banno F."/>
            <person name="Bowser L."/>
            <person name="Brooks S.Y."/>
            <person name="Carninci P."/>
            <person name="Chao Q."/>
            <person name="Choy N."/>
            <person name="Enju A."/>
            <person name="Goldsmith A.D."/>
            <person name="Gurjal M."/>
            <person name="Hansen N.F."/>
            <person name="Hayashizaki Y."/>
            <person name="Johnson-Hopson C."/>
            <person name="Hsuan V.W."/>
            <person name="Iida K."/>
            <person name="Karnes M."/>
            <person name="Khan S."/>
            <person name="Koesema E."/>
            <person name="Ishida J."/>
            <person name="Jiang P.X."/>
            <person name="Jones T."/>
            <person name="Kawai J."/>
            <person name="Kamiya A."/>
            <person name="Meyers C."/>
            <person name="Nakajima M."/>
            <person name="Narusaka M."/>
            <person name="Seki M."/>
            <person name="Sakurai T."/>
            <person name="Satou M."/>
            <person name="Tamse R."/>
            <person name="Vaysberg M."/>
            <person name="Wallender E.K."/>
            <person name="Wong C."/>
            <person name="Yamamura Y."/>
            <person name="Yuan S."/>
            <person name="Shinozaki K."/>
            <person name="Davis R.W."/>
            <person name="Theologis A."/>
            <person name="Ecker J.R."/>
        </authorList>
    </citation>
    <scope>NUCLEOTIDE SEQUENCE [LARGE SCALE MRNA] (ISOFORM 1)</scope>
    <source>
        <strain>cv. Columbia</strain>
    </source>
</reference>
<reference key="4">
    <citation type="journal article" date="2007" name="FEBS Lett.">
        <title>Nitrate transporters and peptide transporters.</title>
        <authorList>
            <person name="Tsay Y.F."/>
            <person name="Chiu C.C."/>
            <person name="Tsai C.B."/>
            <person name="Ho C.H."/>
            <person name="Hsu P.K."/>
        </authorList>
    </citation>
    <scope>TISSUE SPECIFICITY</scope>
    <scope>GENE FAMILY</scope>
</reference>
<reference key="5">
    <citation type="journal article" date="2010" name="Plant Cell">
        <title>The Arabidopsis nitrate transporter NRT1.8 functions in nitrate removal from the xylem sap and mediates cadmium tolerance.</title>
        <authorList>
            <person name="Li J.Y."/>
            <person name="Fu Y.L."/>
            <person name="Pike S.M."/>
            <person name="Bao J."/>
            <person name="Tian W."/>
            <person name="Zhang Y."/>
            <person name="Chen C.Z."/>
            <person name="Zhang Y."/>
            <person name="Li H.M."/>
            <person name="Huang J."/>
            <person name="Li L.G."/>
            <person name="Schroeder J.I."/>
            <person name="Gassmann W."/>
            <person name="Gong J.M."/>
        </authorList>
    </citation>
    <scope>GENE FAMILY</scope>
</reference>
<reference key="6">
    <citation type="journal article" date="2012" name="Proc. Natl. Acad. Sci. U.S.A.">
        <title>Identification of an abscisic acid transporter by functional screening using the receptor complex as a sensor.</title>
        <authorList>
            <person name="Kanno Y."/>
            <person name="Hanada A."/>
            <person name="Chiba Y."/>
            <person name="Ichikawa T."/>
            <person name="Nakazawa M."/>
            <person name="Matsui M."/>
            <person name="Koshiba T."/>
            <person name="Kamiya Y."/>
            <person name="Seo M."/>
        </authorList>
    </citation>
    <scope>FUNCTION</scope>
</reference>
<reference key="7">
    <citation type="journal article" date="2014" name="Trends Plant Sci.">
        <title>A unified nomenclature of NITRATE TRANSPORTER 1/PEPTIDE TRANSPORTER family members in plants.</title>
        <authorList>
            <person name="Leran S."/>
            <person name="Varala K."/>
            <person name="Boyer J.C."/>
            <person name="Chiurazzi M."/>
            <person name="Crawford N."/>
            <person name="Daniel-Vedele F."/>
            <person name="David L."/>
            <person name="Dickstein R."/>
            <person name="Fernandez E."/>
            <person name="Forde B."/>
            <person name="Gassmann W."/>
            <person name="Geiger D."/>
            <person name="Gojon A."/>
            <person name="Gong J.M."/>
            <person name="Halkier B.A."/>
            <person name="Harris J.M."/>
            <person name="Hedrich R."/>
            <person name="Limami A.M."/>
            <person name="Rentsch D."/>
            <person name="Seo M."/>
            <person name="Tsay Y.F."/>
            <person name="Zhang M."/>
            <person name="Coruzzi G."/>
            <person name="Lacombe B."/>
        </authorList>
    </citation>
    <scope>GENE FAMILY</scope>
    <scope>NOMENCLATURE</scope>
</reference>
<organism>
    <name type="scientific">Arabidopsis thaliana</name>
    <name type="common">Mouse-ear cress</name>
    <dbReference type="NCBI Taxonomy" id="3702"/>
    <lineage>
        <taxon>Eukaryota</taxon>
        <taxon>Viridiplantae</taxon>
        <taxon>Streptophyta</taxon>
        <taxon>Embryophyta</taxon>
        <taxon>Tracheophyta</taxon>
        <taxon>Spermatophyta</taxon>
        <taxon>Magnoliopsida</taxon>
        <taxon>eudicotyledons</taxon>
        <taxon>Gunneridae</taxon>
        <taxon>Pentapetalae</taxon>
        <taxon>rosids</taxon>
        <taxon>malvids</taxon>
        <taxon>Brassicales</taxon>
        <taxon>Brassicaceae</taxon>
        <taxon>Camelineae</taxon>
        <taxon>Arabidopsis</taxon>
    </lineage>
</organism>
<protein>
    <recommendedName>
        <fullName>Protein NRT1/ PTR FAMILY 4.5</fullName>
        <shortName>AtNPF4.5</shortName>
    </recommendedName>
    <alternativeName>
        <fullName>Protein ABA-IMPORTING TRANSPORTER 2</fullName>
    </alternativeName>
</protein>
<proteinExistence type="evidence at transcript level"/>